<feature type="chain" id="PRO_0000146197" description="Small ribosomal subunit protein uS12">
    <location>
        <begin position="1"/>
        <end position="128"/>
    </location>
</feature>
<feature type="modified residue" description="3-methylthioaspartic acid" evidence="1">
    <location>
        <position position="89"/>
    </location>
</feature>
<keyword id="KW-0488">Methylation</keyword>
<keyword id="KW-1185">Reference proteome</keyword>
<keyword id="KW-0687">Ribonucleoprotein</keyword>
<keyword id="KW-0689">Ribosomal protein</keyword>
<keyword id="KW-0694">RNA-binding</keyword>
<keyword id="KW-0699">rRNA-binding</keyword>
<keyword id="KW-0820">tRNA-binding</keyword>
<accession>Q9PI18</accession>
<accession>Q0PB22</accession>
<evidence type="ECO:0000250" key="1"/>
<evidence type="ECO:0000255" key="2">
    <source>
        <dbReference type="HAMAP-Rule" id="MF_00403"/>
    </source>
</evidence>
<evidence type="ECO:0000305" key="3"/>
<reference key="1">
    <citation type="journal article" date="2000" name="Nature">
        <title>The genome sequence of the food-borne pathogen Campylobacter jejuni reveals hypervariable sequences.</title>
        <authorList>
            <person name="Parkhill J."/>
            <person name="Wren B.W."/>
            <person name="Mungall K.L."/>
            <person name="Ketley J.M."/>
            <person name="Churcher C.M."/>
            <person name="Basham D."/>
            <person name="Chillingworth T."/>
            <person name="Davies R.M."/>
            <person name="Feltwell T."/>
            <person name="Holroyd S."/>
            <person name="Jagels K."/>
            <person name="Karlyshev A.V."/>
            <person name="Moule S."/>
            <person name="Pallen M.J."/>
            <person name="Penn C.W."/>
            <person name="Quail M.A."/>
            <person name="Rajandream M.A."/>
            <person name="Rutherford K.M."/>
            <person name="van Vliet A.H.M."/>
            <person name="Whitehead S."/>
            <person name="Barrell B.G."/>
        </authorList>
    </citation>
    <scope>NUCLEOTIDE SEQUENCE [LARGE SCALE GENOMIC DNA]</scope>
    <source>
        <strain>ATCC 700819 / NCTC 11168</strain>
    </source>
</reference>
<proteinExistence type="inferred from homology"/>
<dbReference type="EMBL" id="AL111168">
    <property type="protein sequence ID" value="CAL34639.1"/>
    <property type="molecule type" value="Genomic_DNA"/>
</dbReference>
<dbReference type="PIR" id="F81394">
    <property type="entry name" value="F81394"/>
</dbReference>
<dbReference type="RefSeq" id="WP_002782934.1">
    <property type="nucleotide sequence ID" value="NZ_SZUC01000002.1"/>
</dbReference>
<dbReference type="RefSeq" id="YP_002343925.1">
    <property type="nucleotide sequence ID" value="NC_002163.1"/>
</dbReference>
<dbReference type="SMR" id="Q9PI18"/>
<dbReference type="IntAct" id="Q9PI18">
    <property type="interactions" value="3"/>
</dbReference>
<dbReference type="STRING" id="192222.Cj0491"/>
<dbReference type="PaxDb" id="192222-Cj0491"/>
<dbReference type="EnsemblBacteria" id="CAL34639">
    <property type="protein sequence ID" value="CAL34639"/>
    <property type="gene ID" value="Cj0491"/>
</dbReference>
<dbReference type="GeneID" id="904818"/>
<dbReference type="GeneID" id="98395216"/>
<dbReference type="KEGG" id="cje:Cj0491"/>
<dbReference type="PATRIC" id="fig|192222.6.peg.483"/>
<dbReference type="eggNOG" id="COG0048">
    <property type="taxonomic scope" value="Bacteria"/>
</dbReference>
<dbReference type="HOGENOM" id="CLU_104295_1_2_7"/>
<dbReference type="OrthoDB" id="9802366at2"/>
<dbReference type="PRO" id="PR:Q9PI18"/>
<dbReference type="Proteomes" id="UP000000799">
    <property type="component" value="Chromosome"/>
</dbReference>
<dbReference type="GO" id="GO:0015935">
    <property type="term" value="C:small ribosomal subunit"/>
    <property type="evidence" value="ECO:0007669"/>
    <property type="project" value="InterPro"/>
</dbReference>
<dbReference type="GO" id="GO:0019843">
    <property type="term" value="F:rRNA binding"/>
    <property type="evidence" value="ECO:0007669"/>
    <property type="project" value="UniProtKB-UniRule"/>
</dbReference>
<dbReference type="GO" id="GO:0003735">
    <property type="term" value="F:structural constituent of ribosome"/>
    <property type="evidence" value="ECO:0007669"/>
    <property type="project" value="InterPro"/>
</dbReference>
<dbReference type="GO" id="GO:0000049">
    <property type="term" value="F:tRNA binding"/>
    <property type="evidence" value="ECO:0007669"/>
    <property type="project" value="UniProtKB-UniRule"/>
</dbReference>
<dbReference type="GO" id="GO:0006412">
    <property type="term" value="P:translation"/>
    <property type="evidence" value="ECO:0007669"/>
    <property type="project" value="UniProtKB-UniRule"/>
</dbReference>
<dbReference type="CDD" id="cd03368">
    <property type="entry name" value="Ribosomal_S12"/>
    <property type="match status" value="1"/>
</dbReference>
<dbReference type="FunFam" id="2.40.50.140:FF:000001">
    <property type="entry name" value="30S ribosomal protein S12"/>
    <property type="match status" value="1"/>
</dbReference>
<dbReference type="Gene3D" id="2.40.50.140">
    <property type="entry name" value="Nucleic acid-binding proteins"/>
    <property type="match status" value="1"/>
</dbReference>
<dbReference type="HAMAP" id="MF_00403_B">
    <property type="entry name" value="Ribosomal_uS12_B"/>
    <property type="match status" value="1"/>
</dbReference>
<dbReference type="InterPro" id="IPR012340">
    <property type="entry name" value="NA-bd_OB-fold"/>
</dbReference>
<dbReference type="InterPro" id="IPR006032">
    <property type="entry name" value="Ribosomal_uS12"/>
</dbReference>
<dbReference type="InterPro" id="IPR005679">
    <property type="entry name" value="Ribosomal_uS12_bac"/>
</dbReference>
<dbReference type="NCBIfam" id="TIGR00981">
    <property type="entry name" value="rpsL_bact"/>
    <property type="match status" value="1"/>
</dbReference>
<dbReference type="PANTHER" id="PTHR11652">
    <property type="entry name" value="30S RIBOSOMAL PROTEIN S12 FAMILY MEMBER"/>
    <property type="match status" value="1"/>
</dbReference>
<dbReference type="Pfam" id="PF00164">
    <property type="entry name" value="Ribosom_S12_S23"/>
    <property type="match status" value="1"/>
</dbReference>
<dbReference type="PIRSF" id="PIRSF002133">
    <property type="entry name" value="Ribosomal_S12/S23"/>
    <property type="match status" value="1"/>
</dbReference>
<dbReference type="PRINTS" id="PR01034">
    <property type="entry name" value="RIBOSOMALS12"/>
</dbReference>
<dbReference type="SUPFAM" id="SSF50249">
    <property type="entry name" value="Nucleic acid-binding proteins"/>
    <property type="match status" value="1"/>
</dbReference>
<dbReference type="PROSITE" id="PS00055">
    <property type="entry name" value="RIBOSOMAL_S12"/>
    <property type="match status" value="1"/>
</dbReference>
<organism>
    <name type="scientific">Campylobacter jejuni subsp. jejuni serotype O:2 (strain ATCC 700819 / NCTC 11168)</name>
    <dbReference type="NCBI Taxonomy" id="192222"/>
    <lineage>
        <taxon>Bacteria</taxon>
        <taxon>Pseudomonadati</taxon>
        <taxon>Campylobacterota</taxon>
        <taxon>Epsilonproteobacteria</taxon>
        <taxon>Campylobacterales</taxon>
        <taxon>Campylobacteraceae</taxon>
        <taxon>Campylobacter</taxon>
    </lineage>
</organism>
<comment type="function">
    <text evidence="2">With S4 and S5 plays an important role in translational accuracy.</text>
</comment>
<comment type="function">
    <text evidence="2">Interacts with and stabilizes bases of the 16S rRNA that are involved in tRNA selection in the A site and with the mRNA backbone. Located at the interface of the 30S and 50S subunits, it traverses the body of the 30S subunit contacting proteins on the other side and probably holding the rRNA structure together. The combined cluster of proteins S8, S12 and S17 appears to hold together the shoulder and platform of the 30S subunit.</text>
</comment>
<comment type="subunit">
    <text evidence="2">Part of the 30S ribosomal subunit. Contacts proteins S8 and S17. May interact with IF1 in the 30S initiation complex.</text>
</comment>
<comment type="similarity">
    <text evidence="2">Belongs to the universal ribosomal protein uS12 family.</text>
</comment>
<protein>
    <recommendedName>
        <fullName evidence="2">Small ribosomal subunit protein uS12</fullName>
    </recommendedName>
    <alternativeName>
        <fullName evidence="3">30S ribosomal protein S12</fullName>
    </alternativeName>
</protein>
<name>RS12_CAMJE</name>
<sequence>MPTINQLVRKERKKVLEKSKSPALKNCPQRRGVCTRVYTTTPKKPNSALRKVAKVRLTSGFEVISYIGGEGHNLQEHSIVLVRGGRVKDLPGVKYHIVRGALDTAGVAKRTVSRSKYGAKRPKAGAAK</sequence>
<gene>
    <name evidence="2" type="primary">rpsL</name>
    <name type="ordered locus">Cj0491</name>
</gene>